<keyword id="KW-0028">Amino-acid biosynthesis</keyword>
<keyword id="KW-0057">Aromatic amino acid biosynthesis</keyword>
<keyword id="KW-0521">NADP</keyword>
<keyword id="KW-0560">Oxidoreductase</keyword>
<organism>
    <name type="scientific">Streptococcus pyogenes serotype M18 (strain MGAS8232)</name>
    <dbReference type="NCBI Taxonomy" id="186103"/>
    <lineage>
        <taxon>Bacteria</taxon>
        <taxon>Bacillati</taxon>
        <taxon>Bacillota</taxon>
        <taxon>Bacilli</taxon>
        <taxon>Lactobacillales</taxon>
        <taxon>Streptococcaceae</taxon>
        <taxon>Streptococcus</taxon>
    </lineage>
</organism>
<feature type="chain" id="PRO_0000136043" description="Shikimate dehydrogenase (NADP(+))">
    <location>
        <begin position="1"/>
        <end position="292"/>
    </location>
</feature>
<feature type="active site" description="Proton acceptor" evidence="1">
    <location>
        <position position="73"/>
    </location>
</feature>
<feature type="binding site" evidence="1">
    <location>
        <begin position="22"/>
        <end position="24"/>
    </location>
    <ligand>
        <name>shikimate</name>
        <dbReference type="ChEBI" id="CHEBI:36208"/>
    </ligand>
</feature>
<feature type="binding site" evidence="1">
    <location>
        <position position="69"/>
    </location>
    <ligand>
        <name>shikimate</name>
        <dbReference type="ChEBI" id="CHEBI:36208"/>
    </ligand>
</feature>
<feature type="binding site" evidence="1">
    <location>
        <position position="94"/>
    </location>
    <ligand>
        <name>shikimate</name>
        <dbReference type="ChEBI" id="CHEBI:36208"/>
    </ligand>
</feature>
<feature type="binding site" evidence="1">
    <location>
        <position position="111"/>
    </location>
    <ligand>
        <name>shikimate</name>
        <dbReference type="ChEBI" id="CHEBI:36208"/>
    </ligand>
</feature>
<feature type="binding site" evidence="1">
    <location>
        <begin position="135"/>
        <end position="139"/>
    </location>
    <ligand>
        <name>NADP(+)</name>
        <dbReference type="ChEBI" id="CHEBI:58349"/>
    </ligand>
</feature>
<feature type="binding site" evidence="1">
    <location>
        <position position="236"/>
    </location>
    <ligand>
        <name>NADP(+)</name>
        <dbReference type="ChEBI" id="CHEBI:58349"/>
    </ligand>
</feature>
<feature type="binding site" evidence="1">
    <location>
        <position position="238"/>
    </location>
    <ligand>
        <name>shikimate</name>
        <dbReference type="ChEBI" id="CHEBI:36208"/>
    </ligand>
</feature>
<feature type="binding site" evidence="1">
    <location>
        <position position="260"/>
    </location>
    <ligand>
        <name>NADP(+)</name>
        <dbReference type="ChEBI" id="CHEBI:58349"/>
    </ligand>
</feature>
<proteinExistence type="inferred from homology"/>
<gene>
    <name evidence="1" type="primary">aroE</name>
    <name type="ordered locus">spyM18_1592</name>
</gene>
<reference key="1">
    <citation type="journal article" date="2002" name="Proc. Natl. Acad. Sci. U.S.A.">
        <title>Genome sequence and comparative microarray analysis of serotype M18 group A Streptococcus strains associated with acute rheumatic fever outbreaks.</title>
        <authorList>
            <person name="Smoot J.C."/>
            <person name="Barbian K.D."/>
            <person name="Van Gompel J.J."/>
            <person name="Smoot L.M."/>
            <person name="Chaussee M.S."/>
            <person name="Sylva G.L."/>
            <person name="Sturdevant D.E."/>
            <person name="Ricklefs S.M."/>
            <person name="Porcella S.F."/>
            <person name="Parkins L.D."/>
            <person name="Beres S.B."/>
            <person name="Campbell D.S."/>
            <person name="Smith T.M."/>
            <person name="Zhang Q."/>
            <person name="Kapur V."/>
            <person name="Daly J.A."/>
            <person name="Veasy L.G."/>
            <person name="Musser J.M."/>
        </authorList>
    </citation>
    <scope>NUCLEOTIDE SEQUENCE [LARGE SCALE GENOMIC DNA]</scope>
    <source>
        <strain>MGAS8232</strain>
    </source>
</reference>
<comment type="function">
    <text evidence="1">Involved in the biosynthesis of the chorismate, which leads to the biosynthesis of aromatic amino acids. Catalyzes the reversible NADPH linked reduction of 3-dehydroshikimate (DHSA) to yield shikimate (SA).</text>
</comment>
<comment type="catalytic activity">
    <reaction evidence="1">
        <text>shikimate + NADP(+) = 3-dehydroshikimate + NADPH + H(+)</text>
        <dbReference type="Rhea" id="RHEA:17737"/>
        <dbReference type="ChEBI" id="CHEBI:15378"/>
        <dbReference type="ChEBI" id="CHEBI:16630"/>
        <dbReference type="ChEBI" id="CHEBI:36208"/>
        <dbReference type="ChEBI" id="CHEBI:57783"/>
        <dbReference type="ChEBI" id="CHEBI:58349"/>
        <dbReference type="EC" id="1.1.1.25"/>
    </reaction>
</comment>
<comment type="pathway">
    <text evidence="1">Metabolic intermediate biosynthesis; chorismate biosynthesis; chorismate from D-erythrose 4-phosphate and phosphoenolpyruvate: step 4/7.</text>
</comment>
<comment type="subunit">
    <text evidence="1">Homodimer.</text>
</comment>
<comment type="similarity">
    <text evidence="1">Belongs to the shikimate dehydrogenase family.</text>
</comment>
<dbReference type="EC" id="1.1.1.25" evidence="1"/>
<dbReference type="EMBL" id="AE009949">
    <property type="protein sequence ID" value="AAL98153.1"/>
    <property type="molecule type" value="Genomic_DNA"/>
</dbReference>
<dbReference type="RefSeq" id="WP_011018033.1">
    <property type="nucleotide sequence ID" value="NC_003485.1"/>
</dbReference>
<dbReference type="SMR" id="Q8P031"/>
<dbReference type="KEGG" id="spm:spyM18_1592"/>
<dbReference type="HOGENOM" id="CLU_044063_4_4_9"/>
<dbReference type="UniPathway" id="UPA00053">
    <property type="reaction ID" value="UER00087"/>
</dbReference>
<dbReference type="GO" id="GO:0050661">
    <property type="term" value="F:NADP binding"/>
    <property type="evidence" value="ECO:0007669"/>
    <property type="project" value="InterPro"/>
</dbReference>
<dbReference type="GO" id="GO:0004764">
    <property type="term" value="F:shikimate 3-dehydrogenase (NADP+) activity"/>
    <property type="evidence" value="ECO:0007669"/>
    <property type="project" value="UniProtKB-UniRule"/>
</dbReference>
<dbReference type="GO" id="GO:0008652">
    <property type="term" value="P:amino acid biosynthetic process"/>
    <property type="evidence" value="ECO:0007669"/>
    <property type="project" value="UniProtKB-KW"/>
</dbReference>
<dbReference type="GO" id="GO:0009073">
    <property type="term" value="P:aromatic amino acid family biosynthetic process"/>
    <property type="evidence" value="ECO:0007669"/>
    <property type="project" value="UniProtKB-KW"/>
</dbReference>
<dbReference type="GO" id="GO:0009423">
    <property type="term" value="P:chorismate biosynthetic process"/>
    <property type="evidence" value="ECO:0007669"/>
    <property type="project" value="UniProtKB-UniRule"/>
</dbReference>
<dbReference type="GO" id="GO:0019632">
    <property type="term" value="P:shikimate metabolic process"/>
    <property type="evidence" value="ECO:0007669"/>
    <property type="project" value="InterPro"/>
</dbReference>
<dbReference type="CDD" id="cd01065">
    <property type="entry name" value="NAD_bind_Shikimate_DH"/>
    <property type="match status" value="1"/>
</dbReference>
<dbReference type="FunFam" id="3.40.50.10860:FF:000004">
    <property type="entry name" value="Quinate/shikimate dehydrogenase"/>
    <property type="match status" value="1"/>
</dbReference>
<dbReference type="FunFam" id="3.40.50.720:FF:000086">
    <property type="entry name" value="Quinate/shikimate dehydrogenase"/>
    <property type="match status" value="1"/>
</dbReference>
<dbReference type="Gene3D" id="3.40.50.10860">
    <property type="entry name" value="Leucine Dehydrogenase, chain A, domain 1"/>
    <property type="match status" value="1"/>
</dbReference>
<dbReference type="Gene3D" id="3.40.50.720">
    <property type="entry name" value="NAD(P)-binding Rossmann-like Domain"/>
    <property type="match status" value="1"/>
</dbReference>
<dbReference type="HAMAP" id="MF_00222">
    <property type="entry name" value="Shikimate_DH_AroE"/>
    <property type="match status" value="1"/>
</dbReference>
<dbReference type="InterPro" id="IPR046346">
    <property type="entry name" value="Aminoacid_DH-like_N_sf"/>
</dbReference>
<dbReference type="InterPro" id="IPR036291">
    <property type="entry name" value="NAD(P)-bd_dom_sf"/>
</dbReference>
<dbReference type="InterPro" id="IPR041121">
    <property type="entry name" value="SDH_C"/>
</dbReference>
<dbReference type="InterPro" id="IPR011342">
    <property type="entry name" value="Shikimate_DH"/>
</dbReference>
<dbReference type="InterPro" id="IPR013708">
    <property type="entry name" value="Shikimate_DH-bd_N"/>
</dbReference>
<dbReference type="InterPro" id="IPR022893">
    <property type="entry name" value="Shikimate_DH_fam"/>
</dbReference>
<dbReference type="NCBIfam" id="TIGR00507">
    <property type="entry name" value="aroE"/>
    <property type="match status" value="1"/>
</dbReference>
<dbReference type="NCBIfam" id="NF001319">
    <property type="entry name" value="PRK00258.3-3"/>
    <property type="match status" value="1"/>
</dbReference>
<dbReference type="PANTHER" id="PTHR21089:SF1">
    <property type="entry name" value="BIFUNCTIONAL 3-DEHYDROQUINATE DEHYDRATASE_SHIKIMATE DEHYDROGENASE, CHLOROPLASTIC"/>
    <property type="match status" value="1"/>
</dbReference>
<dbReference type="PANTHER" id="PTHR21089">
    <property type="entry name" value="SHIKIMATE DEHYDROGENASE"/>
    <property type="match status" value="1"/>
</dbReference>
<dbReference type="Pfam" id="PF18317">
    <property type="entry name" value="SDH_C"/>
    <property type="match status" value="1"/>
</dbReference>
<dbReference type="Pfam" id="PF08501">
    <property type="entry name" value="Shikimate_dh_N"/>
    <property type="match status" value="1"/>
</dbReference>
<dbReference type="SUPFAM" id="SSF53223">
    <property type="entry name" value="Aminoacid dehydrogenase-like, N-terminal domain"/>
    <property type="match status" value="1"/>
</dbReference>
<dbReference type="SUPFAM" id="SSF51735">
    <property type="entry name" value="NAD(P)-binding Rossmann-fold domains"/>
    <property type="match status" value="1"/>
</dbReference>
<protein>
    <recommendedName>
        <fullName evidence="1">Shikimate dehydrogenase (NADP(+))</fullName>
        <shortName evidence="1">SDH</shortName>
        <ecNumber evidence="1">1.1.1.25</ecNumber>
    </recommendedName>
</protein>
<accession>Q8P031</accession>
<name>AROE_STRP8</name>
<evidence type="ECO:0000255" key="1">
    <source>
        <dbReference type="HAMAP-Rule" id="MF_00222"/>
    </source>
</evidence>
<sequence>MSERLSGHTLLVSLLATPIRHSLSPKMHNEAYAKLGLDYAYLAFEVGTEQLADAVQGIRALGIRGSNVSMPNKEAILPLLDDLSPAAELVGAVNTVVNKDGKGHLVGHITDGIGALRALADEGVSVKNKIITLAGVGGAGKAIAVQLAFDGAKEIRLFNRQATRLSSVQKLVTKLNQLTRTKVTLQDLEDQTAFKEAIRESHLFIDATSVGMKPLENLSLITDPELIRPDLVVFDIVYSPAETKLLAFARQHGAQKVINGLGMVLYQGAEAFKLITGQDMPVDAIKPLLGDK</sequence>